<reference key="1">
    <citation type="journal article" date="2003" name="Mol. Microbiol.">
        <title>Genome-based analysis of virulence genes in a non-biofilm-forming Staphylococcus epidermidis strain (ATCC 12228).</title>
        <authorList>
            <person name="Zhang Y.-Q."/>
            <person name="Ren S.-X."/>
            <person name="Li H.-L."/>
            <person name="Wang Y.-X."/>
            <person name="Fu G."/>
            <person name="Yang J."/>
            <person name="Qin Z.-Q."/>
            <person name="Miao Y.-G."/>
            <person name="Wang W.-Y."/>
            <person name="Chen R.-S."/>
            <person name="Shen Y."/>
            <person name="Chen Z."/>
            <person name="Yuan Z.-H."/>
            <person name="Zhao G.-P."/>
            <person name="Qu D."/>
            <person name="Danchin A."/>
            <person name="Wen Y.-M."/>
        </authorList>
    </citation>
    <scope>NUCLEOTIDE SEQUENCE [LARGE SCALE GENOMIC DNA]</scope>
    <source>
        <strain>ATCC 12228 / FDA PCI 1200</strain>
    </source>
</reference>
<keyword id="KW-0238">DNA-binding</keyword>
<comment type="subunit">
    <text evidence="1">Homotetramer.</text>
</comment>
<proteinExistence type="inferred from homology"/>
<protein>
    <recommendedName>
        <fullName evidence="1">Single-stranded DNA-binding protein</fullName>
        <shortName evidence="1">SSB</shortName>
    </recommendedName>
</protein>
<gene>
    <name type="primary">ssb</name>
    <name type="ordered locus">SE_1695</name>
</gene>
<dbReference type="EMBL" id="AE015929">
    <property type="protein sequence ID" value="AAO05294.1"/>
    <property type="molecule type" value="Genomic_DNA"/>
</dbReference>
<dbReference type="RefSeq" id="NP_765250.1">
    <property type="nucleotide sequence ID" value="NC_004461.1"/>
</dbReference>
<dbReference type="RefSeq" id="WP_002457121.1">
    <property type="nucleotide sequence ID" value="NZ_WBME01000021.1"/>
</dbReference>
<dbReference type="SMR" id="Q8CNK0"/>
<dbReference type="KEGG" id="sep:SE_1695"/>
<dbReference type="PATRIC" id="fig|176280.10.peg.1655"/>
<dbReference type="eggNOG" id="COG0629">
    <property type="taxonomic scope" value="Bacteria"/>
</dbReference>
<dbReference type="HOGENOM" id="CLU_078758_6_1_9"/>
<dbReference type="OrthoDB" id="9809878at2"/>
<dbReference type="Proteomes" id="UP000001411">
    <property type="component" value="Chromosome"/>
</dbReference>
<dbReference type="GO" id="GO:0009295">
    <property type="term" value="C:nucleoid"/>
    <property type="evidence" value="ECO:0007669"/>
    <property type="project" value="TreeGrafter"/>
</dbReference>
<dbReference type="GO" id="GO:0003697">
    <property type="term" value="F:single-stranded DNA binding"/>
    <property type="evidence" value="ECO:0007669"/>
    <property type="project" value="UniProtKB-UniRule"/>
</dbReference>
<dbReference type="GO" id="GO:0006260">
    <property type="term" value="P:DNA replication"/>
    <property type="evidence" value="ECO:0007669"/>
    <property type="project" value="InterPro"/>
</dbReference>
<dbReference type="CDD" id="cd04496">
    <property type="entry name" value="SSB_OBF"/>
    <property type="match status" value="1"/>
</dbReference>
<dbReference type="Gene3D" id="2.40.50.140">
    <property type="entry name" value="Nucleic acid-binding proteins"/>
    <property type="match status" value="1"/>
</dbReference>
<dbReference type="HAMAP" id="MF_00984">
    <property type="entry name" value="SSB"/>
    <property type="match status" value="1"/>
</dbReference>
<dbReference type="InterPro" id="IPR012340">
    <property type="entry name" value="NA-bd_OB-fold"/>
</dbReference>
<dbReference type="InterPro" id="IPR000424">
    <property type="entry name" value="Primosome_PriB/ssb"/>
</dbReference>
<dbReference type="InterPro" id="IPR011344">
    <property type="entry name" value="ssDNA-bd"/>
</dbReference>
<dbReference type="NCBIfam" id="TIGR00621">
    <property type="entry name" value="ssb"/>
    <property type="match status" value="1"/>
</dbReference>
<dbReference type="PANTHER" id="PTHR10302">
    <property type="entry name" value="SINGLE-STRANDED DNA-BINDING PROTEIN"/>
    <property type="match status" value="1"/>
</dbReference>
<dbReference type="PANTHER" id="PTHR10302:SF27">
    <property type="entry name" value="SINGLE-STRANDED DNA-BINDING PROTEIN"/>
    <property type="match status" value="1"/>
</dbReference>
<dbReference type="Pfam" id="PF00436">
    <property type="entry name" value="SSB"/>
    <property type="match status" value="1"/>
</dbReference>
<dbReference type="PIRSF" id="PIRSF002070">
    <property type="entry name" value="SSB"/>
    <property type="match status" value="1"/>
</dbReference>
<dbReference type="SUPFAM" id="SSF50249">
    <property type="entry name" value="Nucleic acid-binding proteins"/>
    <property type="match status" value="1"/>
</dbReference>
<dbReference type="PROSITE" id="PS50935">
    <property type="entry name" value="SSB"/>
    <property type="match status" value="1"/>
</dbReference>
<accession>Q8CNK0</accession>
<name>SSB_STAES</name>
<evidence type="ECO:0000255" key="1">
    <source>
        <dbReference type="HAMAP-Rule" id="MF_00984"/>
    </source>
</evidence>
<evidence type="ECO:0000256" key="2">
    <source>
        <dbReference type="SAM" id="MobiDB-lite"/>
    </source>
</evidence>
<sequence length="131" mass="15159">MLNKIVIVGRMTKDAQIYEKEDNKIATFCVATERNYKDDNNEISTDYLLCKAFGKTATNIEKYTSQGTLVGITGQMRSRKYEKEGQTHFVTELYVETIKFMSPKNKNNETPSDNQFENNTYQPDDLEIIHI</sequence>
<organism>
    <name type="scientific">Staphylococcus epidermidis (strain ATCC 12228 / FDA PCI 1200)</name>
    <dbReference type="NCBI Taxonomy" id="176280"/>
    <lineage>
        <taxon>Bacteria</taxon>
        <taxon>Bacillati</taxon>
        <taxon>Bacillota</taxon>
        <taxon>Bacilli</taxon>
        <taxon>Bacillales</taxon>
        <taxon>Staphylococcaceae</taxon>
        <taxon>Staphylococcus</taxon>
    </lineage>
</organism>
<feature type="chain" id="PRO_0000096106" description="Single-stranded DNA-binding protein">
    <location>
        <begin position="1"/>
        <end position="131"/>
    </location>
</feature>
<feature type="domain" description="SSB" evidence="1">
    <location>
        <begin position="1"/>
        <end position="102"/>
    </location>
</feature>
<feature type="region of interest" description="Disordered" evidence="2">
    <location>
        <begin position="104"/>
        <end position="123"/>
    </location>
</feature>
<feature type="compositionally biased region" description="Polar residues" evidence="2">
    <location>
        <begin position="104"/>
        <end position="122"/>
    </location>
</feature>